<proteinExistence type="inferred from homology"/>
<evidence type="ECO:0000255" key="1">
    <source>
        <dbReference type="HAMAP-Rule" id="MF_00039"/>
    </source>
</evidence>
<sequence>MIIIVTGTPGVGKTVASKKLSEALNLNYLSLSQFVIENKLYTEYDELRQSYIIDEDKVKEELEKIISTSHLVIETIYPSLVSTADLVVVLRKNPFSLYNELKGRGWADIKVAENVEAEILGVISQEAREAFKDKVCEVDTTEMSTEQILNKILNKQCDGPIEWLVDTKVQRFLEELDKIISSYENDI</sequence>
<reference key="1">
    <citation type="journal article" date="2001" name="Proc. Natl. Acad. Sci. U.S.A.">
        <title>The complete genome of the crenarchaeon Sulfolobus solfataricus P2.</title>
        <authorList>
            <person name="She Q."/>
            <person name="Singh R.K."/>
            <person name="Confalonieri F."/>
            <person name="Zivanovic Y."/>
            <person name="Allard G."/>
            <person name="Awayez M.J."/>
            <person name="Chan-Weiher C.C.-Y."/>
            <person name="Clausen I.G."/>
            <person name="Curtis B.A."/>
            <person name="De Moors A."/>
            <person name="Erauso G."/>
            <person name="Fletcher C."/>
            <person name="Gordon P.M.K."/>
            <person name="Heikamp-de Jong I."/>
            <person name="Jeffries A.C."/>
            <person name="Kozera C.J."/>
            <person name="Medina N."/>
            <person name="Peng X."/>
            <person name="Thi-Ngoc H.P."/>
            <person name="Redder P."/>
            <person name="Schenk M.E."/>
            <person name="Theriault C."/>
            <person name="Tolstrup N."/>
            <person name="Charlebois R.L."/>
            <person name="Doolittle W.F."/>
            <person name="Duguet M."/>
            <person name="Gaasterland T."/>
            <person name="Garrett R.A."/>
            <person name="Ragan M.A."/>
            <person name="Sensen C.W."/>
            <person name="Van der Oost J."/>
        </authorList>
    </citation>
    <scope>NUCLEOTIDE SEQUENCE [LARGE SCALE GENOMIC DNA]</scope>
    <source>
        <strain>ATCC 35092 / DSM 1617 / JCM 11322 / P2</strain>
    </source>
</reference>
<dbReference type="EC" id="2.7.4.3" evidence="1"/>
<dbReference type="EMBL" id="AE006641">
    <property type="protein sequence ID" value="AAK40785.1"/>
    <property type="molecule type" value="Genomic_DNA"/>
</dbReference>
<dbReference type="PIR" id="B90191">
    <property type="entry name" value="B90191"/>
</dbReference>
<dbReference type="RefSeq" id="WP_010922979.1">
    <property type="nucleotide sequence ID" value="NC_002754.1"/>
</dbReference>
<dbReference type="SMR" id="Q97ZW3"/>
<dbReference type="FunCoup" id="Q97ZW3">
    <property type="interactions" value="218"/>
</dbReference>
<dbReference type="STRING" id="273057.SSO0461"/>
<dbReference type="PaxDb" id="273057-SSO0461"/>
<dbReference type="EnsemblBacteria" id="AAK40785">
    <property type="protein sequence ID" value="AAK40785"/>
    <property type="gene ID" value="SSO0461"/>
</dbReference>
<dbReference type="GeneID" id="84061998"/>
<dbReference type="KEGG" id="sso:SSO0461"/>
<dbReference type="PATRIC" id="fig|273057.12.peg.455"/>
<dbReference type="eggNOG" id="arCOG01038">
    <property type="taxonomic scope" value="Archaea"/>
</dbReference>
<dbReference type="HOGENOM" id="CLU_079096_3_1_2"/>
<dbReference type="InParanoid" id="Q97ZW3"/>
<dbReference type="PhylomeDB" id="Q97ZW3"/>
<dbReference type="Proteomes" id="UP000001974">
    <property type="component" value="Chromosome"/>
</dbReference>
<dbReference type="GO" id="GO:0004017">
    <property type="term" value="F:adenylate kinase activity"/>
    <property type="evidence" value="ECO:0007669"/>
    <property type="project" value="UniProtKB-UniRule"/>
</dbReference>
<dbReference type="GO" id="GO:0005524">
    <property type="term" value="F:ATP binding"/>
    <property type="evidence" value="ECO:0007669"/>
    <property type="project" value="UniProtKB-UniRule"/>
</dbReference>
<dbReference type="GO" id="GO:0016887">
    <property type="term" value="F:ATP hydrolysis activity"/>
    <property type="evidence" value="ECO:0007669"/>
    <property type="project" value="InterPro"/>
</dbReference>
<dbReference type="GO" id="GO:0042274">
    <property type="term" value="P:ribosomal small subunit biogenesis"/>
    <property type="evidence" value="ECO:0007669"/>
    <property type="project" value="UniProtKB-UniRule"/>
</dbReference>
<dbReference type="GO" id="GO:0006364">
    <property type="term" value="P:rRNA processing"/>
    <property type="evidence" value="ECO:0007669"/>
    <property type="project" value="UniProtKB-KW"/>
</dbReference>
<dbReference type="Gene3D" id="3.40.50.300">
    <property type="entry name" value="P-loop containing nucleotide triphosphate hydrolases"/>
    <property type="match status" value="1"/>
</dbReference>
<dbReference type="HAMAP" id="MF_00039">
    <property type="entry name" value="Adenylate_kinase_AK6"/>
    <property type="match status" value="1"/>
</dbReference>
<dbReference type="InterPro" id="IPR020618">
    <property type="entry name" value="Adenyl_kinase_AK6"/>
</dbReference>
<dbReference type="InterPro" id="IPR027417">
    <property type="entry name" value="P-loop_NTPase"/>
</dbReference>
<dbReference type="PANTHER" id="PTHR12595:SF0">
    <property type="entry name" value="ADENYLATE KINASE ISOENZYME 6"/>
    <property type="match status" value="1"/>
</dbReference>
<dbReference type="PANTHER" id="PTHR12595">
    <property type="entry name" value="POS9-ACTIVATING FACTOR FAP7-RELATED"/>
    <property type="match status" value="1"/>
</dbReference>
<dbReference type="Pfam" id="PF13238">
    <property type="entry name" value="AAA_18"/>
    <property type="match status" value="1"/>
</dbReference>
<dbReference type="SUPFAM" id="SSF52540">
    <property type="entry name" value="P-loop containing nucleoside triphosphate hydrolases"/>
    <property type="match status" value="1"/>
</dbReference>
<organism>
    <name type="scientific">Saccharolobus solfataricus (strain ATCC 35092 / DSM 1617 / JCM 11322 / P2)</name>
    <name type="common">Sulfolobus solfataricus</name>
    <dbReference type="NCBI Taxonomy" id="273057"/>
    <lineage>
        <taxon>Archaea</taxon>
        <taxon>Thermoproteota</taxon>
        <taxon>Thermoprotei</taxon>
        <taxon>Sulfolobales</taxon>
        <taxon>Sulfolobaceae</taxon>
        <taxon>Saccharolobus</taxon>
    </lineage>
</organism>
<keyword id="KW-0067">ATP-binding</keyword>
<keyword id="KW-0418">Kinase</keyword>
<keyword id="KW-0547">Nucleotide-binding</keyword>
<keyword id="KW-1185">Reference proteome</keyword>
<keyword id="KW-0690">Ribosome biogenesis</keyword>
<keyword id="KW-0698">rRNA processing</keyword>
<keyword id="KW-0808">Transferase</keyword>
<feature type="chain" id="PRO_0000153915" description="Putative adenylate kinase">
    <location>
        <begin position="1"/>
        <end position="187"/>
    </location>
</feature>
<feature type="region of interest" description="NMP" evidence="1">
    <location>
        <begin position="30"/>
        <end position="53"/>
    </location>
</feature>
<feature type="region of interest" description="LID" evidence="1">
    <location>
        <begin position="103"/>
        <end position="113"/>
    </location>
</feature>
<feature type="binding site" evidence="1">
    <location>
        <position position="10"/>
    </location>
    <ligand>
        <name>ATP</name>
        <dbReference type="ChEBI" id="CHEBI:30616"/>
    </ligand>
</feature>
<feature type="binding site" evidence="1">
    <location>
        <position position="12"/>
    </location>
    <ligand>
        <name>ATP</name>
        <dbReference type="ChEBI" id="CHEBI:30616"/>
    </ligand>
</feature>
<feature type="binding site" evidence="1">
    <location>
        <position position="13"/>
    </location>
    <ligand>
        <name>ATP</name>
        <dbReference type="ChEBI" id="CHEBI:30616"/>
    </ligand>
</feature>
<feature type="binding site" evidence="1">
    <location>
        <position position="14"/>
    </location>
    <ligand>
        <name>ATP</name>
        <dbReference type="ChEBI" id="CHEBI:30616"/>
    </ligand>
</feature>
<feature type="binding site" evidence="1">
    <location>
        <position position="15"/>
    </location>
    <ligand>
        <name>ATP</name>
        <dbReference type="ChEBI" id="CHEBI:30616"/>
    </ligand>
</feature>
<feature type="binding site" evidence="1">
    <location>
        <position position="104"/>
    </location>
    <ligand>
        <name>ATP</name>
        <dbReference type="ChEBI" id="CHEBI:30616"/>
    </ligand>
</feature>
<name>KAD6_SACS2</name>
<protein>
    <recommendedName>
        <fullName evidence="1">Putative adenylate kinase</fullName>
        <shortName evidence="1">AK</shortName>
        <ecNumber evidence="1">2.7.4.3</ecNumber>
    </recommendedName>
    <alternativeName>
        <fullName evidence="1">ATP-AMP transphosphorylase</fullName>
    </alternativeName>
</protein>
<accession>Q97ZW3</accession>
<comment type="function">
    <text evidence="1">Broad-specificity nucleoside monophosphate (NMP) kinase that catalyzes the reversible transfer of the terminal phosphate group between nucleoside triphosphates and monophosphates. Also has ATPase activity. Involved in the late maturation steps of the 30S ribosomal particles, specifically 16S rRNA maturation. While NMP activity is not required for ribosome maturation, ATPase activity is. Associates transiently with small ribosomal subunit protein uS11. ATP hydrolysis breaks the interaction with uS11. May temporarily remove uS11 from the ribosome to enable a conformational change of the ribosomal RNA that is needed for the final maturation step of the small ribosomal subunit.</text>
</comment>
<comment type="catalytic activity">
    <reaction evidence="1">
        <text>AMP + ATP = 2 ADP</text>
        <dbReference type="Rhea" id="RHEA:12973"/>
        <dbReference type="ChEBI" id="CHEBI:30616"/>
        <dbReference type="ChEBI" id="CHEBI:456215"/>
        <dbReference type="ChEBI" id="CHEBI:456216"/>
        <dbReference type="EC" id="2.7.4.3"/>
    </reaction>
</comment>
<comment type="catalytic activity">
    <reaction evidence="1">
        <text>ATP + H2O = ADP + phosphate + H(+)</text>
        <dbReference type="Rhea" id="RHEA:13065"/>
        <dbReference type="ChEBI" id="CHEBI:15377"/>
        <dbReference type="ChEBI" id="CHEBI:15378"/>
        <dbReference type="ChEBI" id="CHEBI:30616"/>
        <dbReference type="ChEBI" id="CHEBI:43474"/>
        <dbReference type="ChEBI" id="CHEBI:456216"/>
    </reaction>
</comment>
<comment type="subunit">
    <text evidence="1">Interacts with uS11. Not a structural component of 40S pre-ribosomes, but transiently interacts with them by binding to uS11.</text>
</comment>
<comment type="similarity">
    <text evidence="1">Belongs to the adenylate kinase family. AK6 subfamily.</text>
</comment>
<gene>
    <name type="ordered locus">SSO0461</name>
</gene>